<gene>
    <name evidence="1" type="primary">xseA</name>
    <name type="ordered locus">ETA_10340</name>
</gene>
<keyword id="KW-0963">Cytoplasm</keyword>
<keyword id="KW-0269">Exonuclease</keyword>
<keyword id="KW-0378">Hydrolase</keyword>
<keyword id="KW-0540">Nuclease</keyword>
<keyword id="KW-1185">Reference proteome</keyword>
<name>EX7L_ERWT9</name>
<accession>B2VE96</accession>
<comment type="function">
    <text evidence="1">Bidirectionally degrades single-stranded DNA into large acid-insoluble oligonucleotides, which are then degraded further into small acid-soluble oligonucleotides.</text>
</comment>
<comment type="catalytic activity">
    <reaction evidence="1">
        <text>Exonucleolytic cleavage in either 5'- to 3'- or 3'- to 5'-direction to yield nucleoside 5'-phosphates.</text>
        <dbReference type="EC" id="3.1.11.6"/>
    </reaction>
</comment>
<comment type="subunit">
    <text evidence="1">Heterooligomer composed of large and small subunits.</text>
</comment>
<comment type="subcellular location">
    <subcellularLocation>
        <location evidence="1">Cytoplasm</location>
    </subcellularLocation>
</comment>
<comment type="similarity">
    <text evidence="1">Belongs to the XseA family.</text>
</comment>
<protein>
    <recommendedName>
        <fullName evidence="1">Exodeoxyribonuclease 7 large subunit</fullName>
        <ecNumber evidence="1">3.1.11.6</ecNumber>
    </recommendedName>
    <alternativeName>
        <fullName evidence="1">Exodeoxyribonuclease VII large subunit</fullName>
        <shortName evidence="1">Exonuclease VII large subunit</shortName>
    </alternativeName>
</protein>
<feature type="chain" id="PRO_1000122061" description="Exodeoxyribonuclease 7 large subunit">
    <location>
        <begin position="1"/>
        <end position="456"/>
    </location>
</feature>
<organism>
    <name type="scientific">Erwinia tasmaniensis (strain DSM 17950 / CFBP 7177 / CIP 109463 / NCPPB 4357 / Et1/99)</name>
    <dbReference type="NCBI Taxonomy" id="465817"/>
    <lineage>
        <taxon>Bacteria</taxon>
        <taxon>Pseudomonadati</taxon>
        <taxon>Pseudomonadota</taxon>
        <taxon>Gammaproteobacteria</taxon>
        <taxon>Enterobacterales</taxon>
        <taxon>Erwiniaceae</taxon>
        <taxon>Erwinia</taxon>
    </lineage>
</organism>
<proteinExistence type="inferred from homology"/>
<reference key="1">
    <citation type="journal article" date="2008" name="Environ. Microbiol.">
        <title>The genome of Erwinia tasmaniensis strain Et1/99, a non-pathogenic bacterium in the genus Erwinia.</title>
        <authorList>
            <person name="Kube M."/>
            <person name="Migdoll A.M."/>
            <person name="Mueller I."/>
            <person name="Kuhl H."/>
            <person name="Beck A."/>
            <person name="Reinhardt R."/>
            <person name="Geider K."/>
        </authorList>
    </citation>
    <scope>NUCLEOTIDE SEQUENCE [LARGE SCALE GENOMIC DNA]</scope>
    <source>
        <strain>DSM 17950 / CFBP 7177 / CIP 109463 / NCPPB 4357 / Et1/99</strain>
    </source>
</reference>
<dbReference type="EC" id="3.1.11.6" evidence="1"/>
<dbReference type="EMBL" id="CU468135">
    <property type="protein sequence ID" value="CAO96080.1"/>
    <property type="molecule type" value="Genomic_DNA"/>
</dbReference>
<dbReference type="RefSeq" id="WP_012440780.1">
    <property type="nucleotide sequence ID" value="NC_010694.1"/>
</dbReference>
<dbReference type="SMR" id="B2VE96"/>
<dbReference type="STRING" id="465817.ETA_10340"/>
<dbReference type="KEGG" id="eta:ETA_10340"/>
<dbReference type="eggNOG" id="COG1570">
    <property type="taxonomic scope" value="Bacteria"/>
</dbReference>
<dbReference type="HOGENOM" id="CLU_023625_3_1_6"/>
<dbReference type="OrthoDB" id="9802795at2"/>
<dbReference type="Proteomes" id="UP000001726">
    <property type="component" value="Chromosome"/>
</dbReference>
<dbReference type="GO" id="GO:0005737">
    <property type="term" value="C:cytoplasm"/>
    <property type="evidence" value="ECO:0007669"/>
    <property type="project" value="UniProtKB-SubCell"/>
</dbReference>
<dbReference type="GO" id="GO:0009318">
    <property type="term" value="C:exodeoxyribonuclease VII complex"/>
    <property type="evidence" value="ECO:0007669"/>
    <property type="project" value="InterPro"/>
</dbReference>
<dbReference type="GO" id="GO:0008855">
    <property type="term" value="F:exodeoxyribonuclease VII activity"/>
    <property type="evidence" value="ECO:0007669"/>
    <property type="project" value="UniProtKB-UniRule"/>
</dbReference>
<dbReference type="GO" id="GO:0003676">
    <property type="term" value="F:nucleic acid binding"/>
    <property type="evidence" value="ECO:0007669"/>
    <property type="project" value="InterPro"/>
</dbReference>
<dbReference type="GO" id="GO:0006308">
    <property type="term" value="P:DNA catabolic process"/>
    <property type="evidence" value="ECO:0007669"/>
    <property type="project" value="UniProtKB-UniRule"/>
</dbReference>
<dbReference type="CDD" id="cd04489">
    <property type="entry name" value="ExoVII_LU_OBF"/>
    <property type="match status" value="1"/>
</dbReference>
<dbReference type="HAMAP" id="MF_00378">
    <property type="entry name" value="Exonuc_7_L"/>
    <property type="match status" value="1"/>
</dbReference>
<dbReference type="InterPro" id="IPR003753">
    <property type="entry name" value="Exonuc_VII_L"/>
</dbReference>
<dbReference type="InterPro" id="IPR020579">
    <property type="entry name" value="Exonuc_VII_lsu_C"/>
</dbReference>
<dbReference type="InterPro" id="IPR025824">
    <property type="entry name" value="OB-fold_nuc-bd_dom"/>
</dbReference>
<dbReference type="NCBIfam" id="TIGR00237">
    <property type="entry name" value="xseA"/>
    <property type="match status" value="1"/>
</dbReference>
<dbReference type="PANTHER" id="PTHR30008">
    <property type="entry name" value="EXODEOXYRIBONUCLEASE 7 LARGE SUBUNIT"/>
    <property type="match status" value="1"/>
</dbReference>
<dbReference type="PANTHER" id="PTHR30008:SF0">
    <property type="entry name" value="EXODEOXYRIBONUCLEASE 7 LARGE SUBUNIT"/>
    <property type="match status" value="1"/>
</dbReference>
<dbReference type="Pfam" id="PF02601">
    <property type="entry name" value="Exonuc_VII_L"/>
    <property type="match status" value="1"/>
</dbReference>
<dbReference type="Pfam" id="PF13742">
    <property type="entry name" value="tRNA_anti_2"/>
    <property type="match status" value="1"/>
</dbReference>
<sequence length="456" mass="51640">MSQPPGTNIFTVSRLNSTVRKLLEMEMGQVWLSAEISNFSQPSSGHWYFTLKDDTAQVRCAMFRNGNRRVTFRPQNGQQVLVRATITLYEPRGDYQLIAESMQPAGDGLLQQQFDQLKQRLMAEGLFEQAHKQPLPDPARQVGVITSSSGAALHDVLRVLQRRDPSLPVVIYPTPVQGAEAPTGIVRAIELANARKECDVLIVGRGGGSLEDLWSFNDERVARAIFASRIPIVSAVGHETDVTIADFVADLRAPTPSAAAELVSRDQIERLRQLQQQQQRMEMAMDYYLARQQSTFTRLQHRLQQQHPQLRLARQQTALMKVQRRLDDALQQHLRQATRRQEQLGQRLNAFRPEMRIERASQQLQQWQYRLRQAMQQRLGTGKQHFGQLAARLEGVSPLATLARGFSVTSTAEGQVVKKTGQLHQGDTLKTRLDDGWIESEVTAITPLKKTRRRST</sequence>
<evidence type="ECO:0000255" key="1">
    <source>
        <dbReference type="HAMAP-Rule" id="MF_00378"/>
    </source>
</evidence>